<sequence>MAGLLTLLGPAGRVSTRLRPLAPWLLGTATSCAPPLWALALSHPVPDARLLRTARGDCLSRQEPNRTPEPGGSVTGTEKKLSRTQQLKKVFQEYGAVGVSMHIGISLVSLGIFYTVVSSGIDMSAILLKLGFKESLVQSKMAAGTSTFVVAYAIHKLFAPVRISITLVSVPFVVRYFRSVGLFKPPATKP</sequence>
<protein>
    <recommendedName>
        <fullName evidence="5">Protein FAM210B, mitochondrial</fullName>
    </recommendedName>
</protein>
<proteinExistence type="evidence at protein level"/>
<keyword id="KW-0221">Differentiation</keyword>
<keyword id="KW-0265">Erythrocyte maturation</keyword>
<keyword id="KW-0472">Membrane</keyword>
<keyword id="KW-0496">Mitochondrion</keyword>
<keyword id="KW-1000">Mitochondrion outer membrane</keyword>
<keyword id="KW-1185">Reference proteome</keyword>
<keyword id="KW-0809">Transit peptide</keyword>
<keyword id="KW-0812">Transmembrane</keyword>
<keyword id="KW-1133">Transmembrane helix</keyword>
<keyword id="KW-0043">Tumor suppressor</keyword>
<comment type="function">
    <text evidence="1">Plays a role in erythroid differentiation. Involved in cell proliferation and tumor cell growth suppression. Involved in the metabolic reprogramming of cancer cells in a PDK4-dependent manner.</text>
</comment>
<comment type="subcellular location">
    <subcellularLocation>
        <location evidence="1">Mitochondrion</location>
    </subcellularLocation>
    <subcellularLocation>
        <location evidence="1">Mitochondrion outer membrane</location>
        <topology evidence="5">Multi-pass membrane protein</topology>
    </subcellularLocation>
</comment>
<comment type="tissue specificity">
    <text evidence="4">Expressed in late erythroblast differentiation stages (PubMed:26968549).</text>
</comment>
<comment type="induction">
    <text evidence="4">Up-regulated by the erythroid transcription factor GATA1 (PubMed:26968549).</text>
</comment>
<comment type="similarity">
    <text evidence="5">Belongs to the FAM210 family.</text>
</comment>
<feature type="transit peptide" description="Mitochondrion" evidence="1 2">
    <location>
        <begin position="1"/>
        <end position="58"/>
    </location>
</feature>
<feature type="chain" id="PRO_0000079452" description="Protein FAM210B, mitochondrial">
    <location>
        <begin position="59"/>
        <end position="190"/>
    </location>
</feature>
<feature type="transmembrane region" description="Helical" evidence="2">
    <location>
        <begin position="97"/>
        <end position="117"/>
    </location>
</feature>
<feature type="transmembrane region" description="Helical" evidence="2">
    <location>
        <begin position="148"/>
        <end position="168"/>
    </location>
</feature>
<feature type="domain" description="DUF1279">
    <location>
        <begin position="78"/>
        <end position="189"/>
    </location>
</feature>
<feature type="region of interest" description="Disordered" evidence="3">
    <location>
        <begin position="56"/>
        <end position="81"/>
    </location>
</feature>
<feature type="compositionally biased region" description="Basic and acidic residues" evidence="3">
    <location>
        <begin position="56"/>
        <end position="66"/>
    </location>
</feature>
<feature type="sequence conflict" description="In Ref. 3; AAH16210/AAH57642." evidence="5" ref="3">
    <original>S</original>
    <variation>G</variation>
    <location>
        <position position="73"/>
    </location>
</feature>
<gene>
    <name evidence="6" type="primary">Fam210b</name>
</gene>
<name>F210B_MOUSE</name>
<evidence type="ECO:0000250" key="1">
    <source>
        <dbReference type="UniProtKB" id="Q96KR6"/>
    </source>
</evidence>
<evidence type="ECO:0000255" key="2"/>
<evidence type="ECO:0000256" key="3">
    <source>
        <dbReference type="SAM" id="MobiDB-lite"/>
    </source>
</evidence>
<evidence type="ECO:0000269" key="4">
    <source>
    </source>
</evidence>
<evidence type="ECO:0000305" key="5"/>
<evidence type="ECO:0000312" key="6">
    <source>
        <dbReference type="MGI" id="MGI:1914267"/>
    </source>
</evidence>
<reference key="1">
    <citation type="journal article" date="2005" name="Science">
        <title>The transcriptional landscape of the mammalian genome.</title>
        <authorList>
            <person name="Carninci P."/>
            <person name="Kasukawa T."/>
            <person name="Katayama S."/>
            <person name="Gough J."/>
            <person name="Frith M.C."/>
            <person name="Maeda N."/>
            <person name="Oyama R."/>
            <person name="Ravasi T."/>
            <person name="Lenhard B."/>
            <person name="Wells C."/>
            <person name="Kodzius R."/>
            <person name="Shimokawa K."/>
            <person name="Bajic V.B."/>
            <person name="Brenner S.E."/>
            <person name="Batalov S."/>
            <person name="Forrest A.R."/>
            <person name="Zavolan M."/>
            <person name="Davis M.J."/>
            <person name="Wilming L.G."/>
            <person name="Aidinis V."/>
            <person name="Allen J.E."/>
            <person name="Ambesi-Impiombato A."/>
            <person name="Apweiler R."/>
            <person name="Aturaliya R.N."/>
            <person name="Bailey T.L."/>
            <person name="Bansal M."/>
            <person name="Baxter L."/>
            <person name="Beisel K.W."/>
            <person name="Bersano T."/>
            <person name="Bono H."/>
            <person name="Chalk A.M."/>
            <person name="Chiu K.P."/>
            <person name="Choudhary V."/>
            <person name="Christoffels A."/>
            <person name="Clutterbuck D.R."/>
            <person name="Crowe M.L."/>
            <person name="Dalla E."/>
            <person name="Dalrymple B.P."/>
            <person name="de Bono B."/>
            <person name="Della Gatta G."/>
            <person name="di Bernardo D."/>
            <person name="Down T."/>
            <person name="Engstrom P."/>
            <person name="Fagiolini M."/>
            <person name="Faulkner G."/>
            <person name="Fletcher C.F."/>
            <person name="Fukushima T."/>
            <person name="Furuno M."/>
            <person name="Futaki S."/>
            <person name="Gariboldi M."/>
            <person name="Georgii-Hemming P."/>
            <person name="Gingeras T.R."/>
            <person name="Gojobori T."/>
            <person name="Green R.E."/>
            <person name="Gustincich S."/>
            <person name="Harbers M."/>
            <person name="Hayashi Y."/>
            <person name="Hensch T.K."/>
            <person name="Hirokawa N."/>
            <person name="Hill D."/>
            <person name="Huminiecki L."/>
            <person name="Iacono M."/>
            <person name="Ikeo K."/>
            <person name="Iwama A."/>
            <person name="Ishikawa T."/>
            <person name="Jakt M."/>
            <person name="Kanapin A."/>
            <person name="Katoh M."/>
            <person name="Kawasawa Y."/>
            <person name="Kelso J."/>
            <person name="Kitamura H."/>
            <person name="Kitano H."/>
            <person name="Kollias G."/>
            <person name="Krishnan S.P."/>
            <person name="Kruger A."/>
            <person name="Kummerfeld S.K."/>
            <person name="Kurochkin I.V."/>
            <person name="Lareau L.F."/>
            <person name="Lazarevic D."/>
            <person name="Lipovich L."/>
            <person name="Liu J."/>
            <person name="Liuni S."/>
            <person name="McWilliam S."/>
            <person name="Madan Babu M."/>
            <person name="Madera M."/>
            <person name="Marchionni L."/>
            <person name="Matsuda H."/>
            <person name="Matsuzawa S."/>
            <person name="Miki H."/>
            <person name="Mignone F."/>
            <person name="Miyake S."/>
            <person name="Morris K."/>
            <person name="Mottagui-Tabar S."/>
            <person name="Mulder N."/>
            <person name="Nakano N."/>
            <person name="Nakauchi H."/>
            <person name="Ng P."/>
            <person name="Nilsson R."/>
            <person name="Nishiguchi S."/>
            <person name="Nishikawa S."/>
            <person name="Nori F."/>
            <person name="Ohara O."/>
            <person name="Okazaki Y."/>
            <person name="Orlando V."/>
            <person name="Pang K.C."/>
            <person name="Pavan W.J."/>
            <person name="Pavesi G."/>
            <person name="Pesole G."/>
            <person name="Petrovsky N."/>
            <person name="Piazza S."/>
            <person name="Reed J."/>
            <person name="Reid J.F."/>
            <person name="Ring B.Z."/>
            <person name="Ringwald M."/>
            <person name="Rost B."/>
            <person name="Ruan Y."/>
            <person name="Salzberg S.L."/>
            <person name="Sandelin A."/>
            <person name="Schneider C."/>
            <person name="Schoenbach C."/>
            <person name="Sekiguchi K."/>
            <person name="Semple C.A."/>
            <person name="Seno S."/>
            <person name="Sessa L."/>
            <person name="Sheng Y."/>
            <person name="Shibata Y."/>
            <person name="Shimada H."/>
            <person name="Shimada K."/>
            <person name="Silva D."/>
            <person name="Sinclair B."/>
            <person name="Sperling S."/>
            <person name="Stupka E."/>
            <person name="Sugiura K."/>
            <person name="Sultana R."/>
            <person name="Takenaka Y."/>
            <person name="Taki K."/>
            <person name="Tammoja K."/>
            <person name="Tan S.L."/>
            <person name="Tang S."/>
            <person name="Taylor M.S."/>
            <person name="Tegner J."/>
            <person name="Teichmann S.A."/>
            <person name="Ueda H.R."/>
            <person name="van Nimwegen E."/>
            <person name="Verardo R."/>
            <person name="Wei C.L."/>
            <person name="Yagi K."/>
            <person name="Yamanishi H."/>
            <person name="Zabarovsky E."/>
            <person name="Zhu S."/>
            <person name="Zimmer A."/>
            <person name="Hide W."/>
            <person name="Bult C."/>
            <person name="Grimmond S.M."/>
            <person name="Teasdale R.D."/>
            <person name="Liu E.T."/>
            <person name="Brusic V."/>
            <person name="Quackenbush J."/>
            <person name="Wahlestedt C."/>
            <person name="Mattick J.S."/>
            <person name="Hume D.A."/>
            <person name="Kai C."/>
            <person name="Sasaki D."/>
            <person name="Tomaru Y."/>
            <person name="Fukuda S."/>
            <person name="Kanamori-Katayama M."/>
            <person name="Suzuki M."/>
            <person name="Aoki J."/>
            <person name="Arakawa T."/>
            <person name="Iida J."/>
            <person name="Imamura K."/>
            <person name="Itoh M."/>
            <person name="Kato T."/>
            <person name="Kawaji H."/>
            <person name="Kawagashira N."/>
            <person name="Kawashima T."/>
            <person name="Kojima M."/>
            <person name="Kondo S."/>
            <person name="Konno H."/>
            <person name="Nakano K."/>
            <person name="Ninomiya N."/>
            <person name="Nishio T."/>
            <person name="Okada M."/>
            <person name="Plessy C."/>
            <person name="Shibata K."/>
            <person name="Shiraki T."/>
            <person name="Suzuki S."/>
            <person name="Tagami M."/>
            <person name="Waki K."/>
            <person name="Watahiki A."/>
            <person name="Okamura-Oho Y."/>
            <person name="Suzuki H."/>
            <person name="Kawai J."/>
            <person name="Hayashizaki Y."/>
        </authorList>
    </citation>
    <scope>NUCLEOTIDE SEQUENCE [LARGE SCALE MRNA]</scope>
    <source>
        <strain>C57BL/6J</strain>
        <tissue>Liver</tissue>
        <tissue>Small intestine</tissue>
    </source>
</reference>
<reference key="2">
    <citation type="journal article" date="2009" name="PLoS Biol.">
        <title>Lineage-specific biology revealed by a finished genome assembly of the mouse.</title>
        <authorList>
            <person name="Church D.M."/>
            <person name="Goodstadt L."/>
            <person name="Hillier L.W."/>
            <person name="Zody M.C."/>
            <person name="Goldstein S."/>
            <person name="She X."/>
            <person name="Bult C.J."/>
            <person name="Agarwala R."/>
            <person name="Cherry J.L."/>
            <person name="DiCuccio M."/>
            <person name="Hlavina W."/>
            <person name="Kapustin Y."/>
            <person name="Meric P."/>
            <person name="Maglott D."/>
            <person name="Birtle Z."/>
            <person name="Marques A.C."/>
            <person name="Graves T."/>
            <person name="Zhou S."/>
            <person name="Teague B."/>
            <person name="Potamousis K."/>
            <person name="Churas C."/>
            <person name="Place M."/>
            <person name="Herschleb J."/>
            <person name="Runnheim R."/>
            <person name="Forrest D."/>
            <person name="Amos-Landgraf J."/>
            <person name="Schwartz D.C."/>
            <person name="Cheng Z."/>
            <person name="Lindblad-Toh K."/>
            <person name="Eichler E.E."/>
            <person name="Ponting C.P."/>
        </authorList>
    </citation>
    <scope>NUCLEOTIDE SEQUENCE [LARGE SCALE GENOMIC DNA]</scope>
    <source>
        <strain>C57BL/6J</strain>
    </source>
</reference>
<reference key="3">
    <citation type="journal article" date="2004" name="Genome Res.">
        <title>The status, quality, and expansion of the NIH full-length cDNA project: the Mammalian Gene Collection (MGC).</title>
        <authorList>
            <consortium name="The MGC Project Team"/>
        </authorList>
    </citation>
    <scope>NUCLEOTIDE SEQUENCE [LARGE SCALE MRNA]</scope>
    <source>
        <tissue>Mammary gland</tissue>
        <tissue>Salivary gland</tissue>
    </source>
</reference>
<reference key="4">
    <citation type="journal article" date="2010" name="Cell">
        <title>A tissue-specific atlas of mouse protein phosphorylation and expression.</title>
        <authorList>
            <person name="Huttlin E.L."/>
            <person name="Jedrychowski M.P."/>
            <person name="Elias J.E."/>
            <person name="Goswami T."/>
            <person name="Rad R."/>
            <person name="Beausoleil S.A."/>
            <person name="Villen J."/>
            <person name="Haas W."/>
            <person name="Sowa M.E."/>
            <person name="Gygi S.P."/>
        </authorList>
    </citation>
    <scope>IDENTIFICATION BY MASS SPECTROMETRY [LARGE SCALE ANALYSIS]</scope>
    <source>
        <tissue>Liver</tissue>
        <tissue>Pancreas</tissue>
    </source>
</reference>
<reference key="5">
    <citation type="journal article" date="2016" name="Int. J. Hematol.">
        <title>Identification of a novel putative mitochondrial protein FAM210B associated with erythroid differentiation.</title>
        <authorList>
            <person name="Kondo A."/>
            <person name="Fujiwara T."/>
            <person name="Okitsu Y."/>
            <person name="Fukuhara N."/>
            <person name="Onishi Y."/>
            <person name="Nakamura Y."/>
            <person name="Sawada K."/>
            <person name="Harigae H."/>
        </authorList>
    </citation>
    <scope>TISSUE SPECIFICITY</scope>
    <scope>INDUCTION</scope>
</reference>
<accession>Q9D8B6</accession>
<accession>Q3UFZ3</accession>
<accession>Q91WA2</accession>
<dbReference type="EMBL" id="AK008190">
    <property type="protein sequence ID" value="BAB25521.1"/>
    <property type="molecule type" value="mRNA"/>
</dbReference>
<dbReference type="EMBL" id="AK076087">
    <property type="protein sequence ID" value="BAC36173.1"/>
    <property type="molecule type" value="mRNA"/>
</dbReference>
<dbReference type="EMBL" id="AK147935">
    <property type="protein sequence ID" value="BAE28240.1"/>
    <property type="molecule type" value="mRNA"/>
</dbReference>
<dbReference type="EMBL" id="AK148213">
    <property type="protein sequence ID" value="BAE28416.1"/>
    <property type="molecule type" value="mRNA"/>
</dbReference>
<dbReference type="EMBL" id="AK149497">
    <property type="protein sequence ID" value="BAE28920.1"/>
    <property type="molecule type" value="mRNA"/>
</dbReference>
<dbReference type="EMBL" id="AK160529">
    <property type="protein sequence ID" value="BAE35847.1"/>
    <property type="molecule type" value="mRNA"/>
</dbReference>
<dbReference type="EMBL" id="AL844162">
    <property type="status" value="NOT_ANNOTATED_CDS"/>
    <property type="molecule type" value="Genomic_DNA"/>
</dbReference>
<dbReference type="EMBL" id="BC016210">
    <property type="protein sequence ID" value="AAH16210.1"/>
    <property type="molecule type" value="mRNA"/>
</dbReference>
<dbReference type="EMBL" id="BC057642">
    <property type="protein sequence ID" value="AAH57642.1"/>
    <property type="molecule type" value="mRNA"/>
</dbReference>
<dbReference type="CCDS" id="CCDS17128.1"/>
<dbReference type="RefSeq" id="NP_080188.3">
    <property type="nucleotide sequence ID" value="NM_025912.4"/>
</dbReference>
<dbReference type="RefSeq" id="XP_006500122.1">
    <property type="nucleotide sequence ID" value="XM_006500059.2"/>
</dbReference>
<dbReference type="FunCoup" id="Q9D8B6">
    <property type="interactions" value="301"/>
</dbReference>
<dbReference type="STRING" id="10090.ENSMUSP00000028995"/>
<dbReference type="iPTMnet" id="Q9D8B6"/>
<dbReference type="PhosphoSitePlus" id="Q9D8B6"/>
<dbReference type="jPOST" id="Q9D8B6"/>
<dbReference type="PaxDb" id="10090-ENSMUSP00000028995"/>
<dbReference type="ProteomicsDB" id="275728"/>
<dbReference type="Pumba" id="Q9D8B6"/>
<dbReference type="Antibodypedia" id="63338">
    <property type="antibodies" value="22 antibodies from 9 providers"/>
</dbReference>
<dbReference type="DNASU" id="67017"/>
<dbReference type="Ensembl" id="ENSMUST00000028995.5">
    <property type="protein sequence ID" value="ENSMUSP00000028995.5"/>
    <property type="gene ID" value="ENSMUSG00000027495.5"/>
</dbReference>
<dbReference type="GeneID" id="67017"/>
<dbReference type="KEGG" id="mmu:67017"/>
<dbReference type="UCSC" id="uc012ckn.1">
    <property type="organism name" value="mouse"/>
</dbReference>
<dbReference type="AGR" id="MGI:1914267"/>
<dbReference type="CTD" id="116151"/>
<dbReference type="MGI" id="MGI:1914267">
    <property type="gene designation" value="Fam210b"/>
</dbReference>
<dbReference type="VEuPathDB" id="HostDB:ENSMUSG00000027495"/>
<dbReference type="eggNOG" id="KOG4526">
    <property type="taxonomic scope" value="Eukaryota"/>
</dbReference>
<dbReference type="GeneTree" id="ENSGT00940000156134"/>
<dbReference type="HOGENOM" id="CLU_1414738_0_0_1"/>
<dbReference type="InParanoid" id="Q9D8B6"/>
<dbReference type="OMA" id="CRGHQDP"/>
<dbReference type="OrthoDB" id="426386at2759"/>
<dbReference type="PhylomeDB" id="Q9D8B6"/>
<dbReference type="TreeFam" id="TF313283"/>
<dbReference type="BioGRID-ORCS" id="67017">
    <property type="hits" value="2 hits in 77 CRISPR screens"/>
</dbReference>
<dbReference type="ChiTaRS" id="Fam210b">
    <property type="organism name" value="mouse"/>
</dbReference>
<dbReference type="PRO" id="PR:Q9D8B6"/>
<dbReference type="Proteomes" id="UP000000589">
    <property type="component" value="Chromosome 2"/>
</dbReference>
<dbReference type="RNAct" id="Q9D8B6">
    <property type="molecule type" value="protein"/>
</dbReference>
<dbReference type="Bgee" id="ENSMUSG00000027495">
    <property type="expression patterns" value="Expressed in fetal liver hematopoietic progenitor cell and 256 other cell types or tissues"/>
</dbReference>
<dbReference type="GO" id="GO:0016020">
    <property type="term" value="C:membrane"/>
    <property type="evidence" value="ECO:0000250"/>
    <property type="project" value="UniProtKB"/>
</dbReference>
<dbReference type="GO" id="GO:0005741">
    <property type="term" value="C:mitochondrial outer membrane"/>
    <property type="evidence" value="ECO:0000250"/>
    <property type="project" value="UniProtKB"/>
</dbReference>
<dbReference type="GO" id="GO:0005739">
    <property type="term" value="C:mitochondrion"/>
    <property type="evidence" value="ECO:0000314"/>
    <property type="project" value="MGI"/>
</dbReference>
<dbReference type="GO" id="GO:0071392">
    <property type="term" value="P:cellular response to estradiol stimulus"/>
    <property type="evidence" value="ECO:0000250"/>
    <property type="project" value="UniProtKB"/>
</dbReference>
<dbReference type="GO" id="GO:0030218">
    <property type="term" value="P:erythrocyte differentiation"/>
    <property type="evidence" value="ECO:0000315"/>
    <property type="project" value="MGI"/>
</dbReference>
<dbReference type="GO" id="GO:0043249">
    <property type="term" value="P:erythrocyte maturation"/>
    <property type="evidence" value="ECO:0007669"/>
    <property type="project" value="UniProtKB-KW"/>
</dbReference>
<dbReference type="GO" id="GO:0006954">
    <property type="term" value="P:inflammatory response"/>
    <property type="evidence" value="ECO:0000315"/>
    <property type="project" value="MGI"/>
</dbReference>
<dbReference type="GO" id="GO:0045648">
    <property type="term" value="P:positive regulation of erythrocyte differentiation"/>
    <property type="evidence" value="ECO:0000250"/>
    <property type="project" value="UniProtKB"/>
</dbReference>
<dbReference type="GO" id="GO:0072593">
    <property type="term" value="P:reactive oxygen species metabolic process"/>
    <property type="evidence" value="ECO:0000315"/>
    <property type="project" value="MGI"/>
</dbReference>
<dbReference type="GO" id="GO:0043588">
    <property type="term" value="P:skin development"/>
    <property type="evidence" value="ECO:0000315"/>
    <property type="project" value="MGI"/>
</dbReference>
<dbReference type="GO" id="GO:0048536">
    <property type="term" value="P:spleen development"/>
    <property type="evidence" value="ECO:0000315"/>
    <property type="project" value="MGI"/>
</dbReference>
<dbReference type="InterPro" id="IPR045866">
    <property type="entry name" value="FAM210A/B-like"/>
</dbReference>
<dbReference type="InterPro" id="IPR009688">
    <property type="entry name" value="FAM210A/B-like_dom"/>
</dbReference>
<dbReference type="PANTHER" id="PTHR21377">
    <property type="entry name" value="PROTEIN FAM210B, MITOCHONDRIAL"/>
    <property type="match status" value="1"/>
</dbReference>
<dbReference type="PANTHER" id="PTHR21377:SF0">
    <property type="entry name" value="PROTEIN FAM210B, MITOCHONDRIAL"/>
    <property type="match status" value="1"/>
</dbReference>
<dbReference type="Pfam" id="PF06916">
    <property type="entry name" value="FAM210A-B_dom"/>
    <property type="match status" value="1"/>
</dbReference>
<organism>
    <name type="scientific">Mus musculus</name>
    <name type="common">Mouse</name>
    <dbReference type="NCBI Taxonomy" id="10090"/>
    <lineage>
        <taxon>Eukaryota</taxon>
        <taxon>Metazoa</taxon>
        <taxon>Chordata</taxon>
        <taxon>Craniata</taxon>
        <taxon>Vertebrata</taxon>
        <taxon>Euteleostomi</taxon>
        <taxon>Mammalia</taxon>
        <taxon>Eutheria</taxon>
        <taxon>Euarchontoglires</taxon>
        <taxon>Glires</taxon>
        <taxon>Rodentia</taxon>
        <taxon>Myomorpha</taxon>
        <taxon>Muroidea</taxon>
        <taxon>Muridae</taxon>
        <taxon>Murinae</taxon>
        <taxon>Mus</taxon>
        <taxon>Mus</taxon>
    </lineage>
</organism>